<accession>Q0AB49</accession>
<comment type="function">
    <text evidence="1">Binds as a heterodimer with protein bS6 to the central domain of the 16S rRNA, where it helps stabilize the platform of the 30S subunit.</text>
</comment>
<comment type="subunit">
    <text evidence="1">Part of the 30S ribosomal subunit. Forms a tight heterodimer with protein bS6.</text>
</comment>
<comment type="similarity">
    <text evidence="1">Belongs to the bacterial ribosomal protein bS18 family.</text>
</comment>
<organism>
    <name type="scientific">Alkalilimnicola ehrlichii (strain ATCC BAA-1101 / DSM 17681 / MLHE-1)</name>
    <dbReference type="NCBI Taxonomy" id="187272"/>
    <lineage>
        <taxon>Bacteria</taxon>
        <taxon>Pseudomonadati</taxon>
        <taxon>Pseudomonadota</taxon>
        <taxon>Gammaproteobacteria</taxon>
        <taxon>Chromatiales</taxon>
        <taxon>Ectothiorhodospiraceae</taxon>
        <taxon>Alkalilimnicola</taxon>
    </lineage>
</organism>
<dbReference type="EMBL" id="CP000453">
    <property type="protein sequence ID" value="ABI55938.1"/>
    <property type="molecule type" value="Genomic_DNA"/>
</dbReference>
<dbReference type="RefSeq" id="WP_011628333.1">
    <property type="nucleotide sequence ID" value="NC_008340.1"/>
</dbReference>
<dbReference type="SMR" id="Q0AB49"/>
<dbReference type="KEGG" id="aeh:Mlg_0584"/>
<dbReference type="eggNOG" id="COG0238">
    <property type="taxonomic scope" value="Bacteria"/>
</dbReference>
<dbReference type="HOGENOM" id="CLU_148710_2_3_6"/>
<dbReference type="OrthoDB" id="9812008at2"/>
<dbReference type="Proteomes" id="UP000001962">
    <property type="component" value="Chromosome"/>
</dbReference>
<dbReference type="GO" id="GO:0022627">
    <property type="term" value="C:cytosolic small ribosomal subunit"/>
    <property type="evidence" value="ECO:0007669"/>
    <property type="project" value="TreeGrafter"/>
</dbReference>
<dbReference type="GO" id="GO:0070181">
    <property type="term" value="F:small ribosomal subunit rRNA binding"/>
    <property type="evidence" value="ECO:0007669"/>
    <property type="project" value="TreeGrafter"/>
</dbReference>
<dbReference type="GO" id="GO:0003735">
    <property type="term" value="F:structural constituent of ribosome"/>
    <property type="evidence" value="ECO:0007669"/>
    <property type="project" value="InterPro"/>
</dbReference>
<dbReference type="GO" id="GO:0006412">
    <property type="term" value="P:translation"/>
    <property type="evidence" value="ECO:0007669"/>
    <property type="project" value="UniProtKB-UniRule"/>
</dbReference>
<dbReference type="FunFam" id="4.10.640.10:FF:000001">
    <property type="entry name" value="30S ribosomal protein S18"/>
    <property type="match status" value="1"/>
</dbReference>
<dbReference type="Gene3D" id="4.10.640.10">
    <property type="entry name" value="Ribosomal protein S18"/>
    <property type="match status" value="1"/>
</dbReference>
<dbReference type="HAMAP" id="MF_00270">
    <property type="entry name" value="Ribosomal_bS18"/>
    <property type="match status" value="1"/>
</dbReference>
<dbReference type="InterPro" id="IPR001648">
    <property type="entry name" value="Ribosomal_bS18"/>
</dbReference>
<dbReference type="InterPro" id="IPR018275">
    <property type="entry name" value="Ribosomal_bS18_CS"/>
</dbReference>
<dbReference type="InterPro" id="IPR036870">
    <property type="entry name" value="Ribosomal_bS18_sf"/>
</dbReference>
<dbReference type="NCBIfam" id="TIGR00165">
    <property type="entry name" value="S18"/>
    <property type="match status" value="1"/>
</dbReference>
<dbReference type="PANTHER" id="PTHR13479">
    <property type="entry name" value="30S RIBOSOMAL PROTEIN S18"/>
    <property type="match status" value="1"/>
</dbReference>
<dbReference type="PANTHER" id="PTHR13479:SF40">
    <property type="entry name" value="SMALL RIBOSOMAL SUBUNIT PROTEIN BS18M"/>
    <property type="match status" value="1"/>
</dbReference>
<dbReference type="Pfam" id="PF01084">
    <property type="entry name" value="Ribosomal_S18"/>
    <property type="match status" value="1"/>
</dbReference>
<dbReference type="PRINTS" id="PR00974">
    <property type="entry name" value="RIBOSOMALS18"/>
</dbReference>
<dbReference type="SUPFAM" id="SSF46911">
    <property type="entry name" value="Ribosomal protein S18"/>
    <property type="match status" value="1"/>
</dbReference>
<dbReference type="PROSITE" id="PS00057">
    <property type="entry name" value="RIBOSOMAL_S18"/>
    <property type="match status" value="1"/>
</dbReference>
<feature type="chain" id="PRO_1000003439" description="Small ribosomal subunit protein bS18">
    <location>
        <begin position="1"/>
        <end position="74"/>
    </location>
</feature>
<reference key="1">
    <citation type="submission" date="2006-08" db="EMBL/GenBank/DDBJ databases">
        <title>Complete sequence of Alkalilimnicola ehrilichei MLHE-1.</title>
        <authorList>
            <person name="Copeland A."/>
            <person name="Lucas S."/>
            <person name="Lapidus A."/>
            <person name="Barry K."/>
            <person name="Detter J.C."/>
            <person name="Glavina del Rio T."/>
            <person name="Hammon N."/>
            <person name="Israni S."/>
            <person name="Dalin E."/>
            <person name="Tice H."/>
            <person name="Pitluck S."/>
            <person name="Sims D."/>
            <person name="Brettin T."/>
            <person name="Bruce D."/>
            <person name="Han C."/>
            <person name="Tapia R."/>
            <person name="Gilna P."/>
            <person name="Schmutz J."/>
            <person name="Larimer F."/>
            <person name="Land M."/>
            <person name="Hauser L."/>
            <person name="Kyrpides N."/>
            <person name="Mikhailova N."/>
            <person name="Oremland R.S."/>
            <person name="Hoeft S.E."/>
            <person name="Switzer-Blum J."/>
            <person name="Kulp T."/>
            <person name="King G."/>
            <person name="Tabita R."/>
            <person name="Witte B."/>
            <person name="Santini J.M."/>
            <person name="Basu P."/>
            <person name="Hollibaugh J.T."/>
            <person name="Xie G."/>
            <person name="Stolz J.F."/>
            <person name="Richardson P."/>
        </authorList>
    </citation>
    <scope>NUCLEOTIDE SEQUENCE [LARGE SCALE GENOMIC DNA]</scope>
    <source>
        <strain>ATCC BAA-1101 / DSM 17681 / MLHE-1</strain>
    </source>
</reference>
<proteinExistence type="inferred from homology"/>
<gene>
    <name evidence="1" type="primary">rpsR</name>
    <name type="ordered locus">Mlg_0584</name>
</gene>
<keyword id="KW-1185">Reference proteome</keyword>
<keyword id="KW-0687">Ribonucleoprotein</keyword>
<keyword id="KW-0689">Ribosomal protein</keyword>
<keyword id="KW-0694">RNA-binding</keyword>
<keyword id="KW-0699">rRNA-binding</keyword>
<protein>
    <recommendedName>
        <fullName evidence="1">Small ribosomal subunit protein bS18</fullName>
    </recommendedName>
    <alternativeName>
        <fullName evidence="2">30S ribosomal protein S18</fullName>
    </alternativeName>
</protein>
<sequence>MARFFRRRKYCRFTAEGVKEIDYKDLNTLRNYVTETGKIVPSRITGTSARYQRQLARAIKRARYLALLPYTDRH</sequence>
<name>RS18_ALKEH</name>
<evidence type="ECO:0000255" key="1">
    <source>
        <dbReference type="HAMAP-Rule" id="MF_00270"/>
    </source>
</evidence>
<evidence type="ECO:0000305" key="2"/>